<keyword id="KW-0240">DNA-directed RNA polymerase</keyword>
<keyword id="KW-0548">Nucleotidyltransferase</keyword>
<keyword id="KW-0804">Transcription</keyword>
<keyword id="KW-0808">Transferase</keyword>
<comment type="function">
    <text evidence="1">DNA-dependent RNA polymerase catalyzes the transcription of DNA into RNA using the four ribonucleoside triphosphates as substrates.</text>
</comment>
<comment type="catalytic activity">
    <reaction evidence="1">
        <text>RNA(n) + a ribonucleoside 5'-triphosphate = RNA(n+1) + diphosphate</text>
        <dbReference type="Rhea" id="RHEA:21248"/>
        <dbReference type="Rhea" id="RHEA-COMP:14527"/>
        <dbReference type="Rhea" id="RHEA-COMP:17342"/>
        <dbReference type="ChEBI" id="CHEBI:33019"/>
        <dbReference type="ChEBI" id="CHEBI:61557"/>
        <dbReference type="ChEBI" id="CHEBI:140395"/>
        <dbReference type="EC" id="2.7.7.6"/>
    </reaction>
</comment>
<comment type="subunit">
    <text evidence="1">Homodimer. The RNAP catalytic core consists of 2 alpha, 1 beta, 1 beta' and 1 omega subunit. When a sigma factor is associated with the core the holoenzyme is formed, which can initiate transcription.</text>
</comment>
<comment type="domain">
    <text evidence="1">The N-terminal domain is essential for RNAP assembly and basal transcription, whereas the C-terminal domain is involved in interaction with transcriptional regulators and with upstream promoter elements.</text>
</comment>
<comment type="similarity">
    <text evidence="1">Belongs to the RNA polymerase alpha chain family.</text>
</comment>
<accession>Q71WH2</accession>
<name>RPOA_LISMF</name>
<proteinExistence type="inferred from homology"/>
<sequence length="314" mass="34906">MIEIEKPKIETIEISDDAKYGKFVVEPLERGYGTTLGNSLRRILLSSLPGAAVTSIQIDGALHEFSVIEGVVEDVTTMILNIKKLALKIYSDEEKTLEIDMQGPGVVTAADINYDSDVEILNPDLHIATLSDNAKFHVRLNATRGRGYTPADQNKRENMPIGVLPVDSIFSPVIRVNYQVENTRVGQSTNYDKLTFDVLTDGSISPEEAVSLGAKILSEHLSIFVNLTDEAQKAEIMIEKEESHKEKVLEMTIEELDLSVRSYNCLKRAGINTVQELADKSEDDMMKVRNLGRKSLEEVKVKLADLGLSLRNEN</sequence>
<reference key="1">
    <citation type="journal article" date="2004" name="Nucleic Acids Res.">
        <title>Whole genome comparisons of serotype 4b and 1/2a strains of the food-borne pathogen Listeria monocytogenes reveal new insights into the core genome components of this species.</title>
        <authorList>
            <person name="Nelson K.E."/>
            <person name="Fouts D.E."/>
            <person name="Mongodin E.F."/>
            <person name="Ravel J."/>
            <person name="DeBoy R.T."/>
            <person name="Kolonay J.F."/>
            <person name="Rasko D.A."/>
            <person name="Angiuoli S.V."/>
            <person name="Gill S.R."/>
            <person name="Paulsen I.T."/>
            <person name="Peterson J.D."/>
            <person name="White O."/>
            <person name="Nelson W.C."/>
            <person name="Nierman W.C."/>
            <person name="Beanan M.J."/>
            <person name="Brinkac L.M."/>
            <person name="Daugherty S.C."/>
            <person name="Dodson R.J."/>
            <person name="Durkin A.S."/>
            <person name="Madupu R."/>
            <person name="Haft D.H."/>
            <person name="Selengut J."/>
            <person name="Van Aken S.E."/>
            <person name="Khouri H.M."/>
            <person name="Fedorova N."/>
            <person name="Forberger H.A."/>
            <person name="Tran B."/>
            <person name="Kathariou S."/>
            <person name="Wonderling L.D."/>
            <person name="Uhlich G.A."/>
            <person name="Bayles D.O."/>
            <person name="Luchansky J.B."/>
            <person name="Fraser C.M."/>
        </authorList>
    </citation>
    <scope>NUCLEOTIDE SEQUENCE [LARGE SCALE GENOMIC DNA]</scope>
    <source>
        <strain>F2365</strain>
    </source>
</reference>
<feature type="chain" id="PRO_0000175329" description="DNA-directed RNA polymerase subunit alpha">
    <location>
        <begin position="1"/>
        <end position="314"/>
    </location>
</feature>
<feature type="region of interest" description="Alpha N-terminal domain (alpha-NTD)" evidence="1">
    <location>
        <begin position="1"/>
        <end position="228"/>
    </location>
</feature>
<feature type="region of interest" description="Alpha C-terminal domain (alpha-CTD)" evidence="1">
    <location>
        <begin position="245"/>
        <end position="314"/>
    </location>
</feature>
<organism>
    <name type="scientific">Listeria monocytogenes serotype 4b (strain F2365)</name>
    <dbReference type="NCBI Taxonomy" id="265669"/>
    <lineage>
        <taxon>Bacteria</taxon>
        <taxon>Bacillati</taxon>
        <taxon>Bacillota</taxon>
        <taxon>Bacilli</taxon>
        <taxon>Bacillales</taxon>
        <taxon>Listeriaceae</taxon>
        <taxon>Listeria</taxon>
    </lineage>
</organism>
<protein>
    <recommendedName>
        <fullName evidence="1">DNA-directed RNA polymerase subunit alpha</fullName>
        <shortName evidence="1">RNAP subunit alpha</shortName>
        <ecNumber evidence="1">2.7.7.6</ecNumber>
    </recommendedName>
    <alternativeName>
        <fullName evidence="1">RNA polymerase subunit alpha</fullName>
    </alternativeName>
    <alternativeName>
        <fullName evidence="1">Transcriptase subunit alpha</fullName>
    </alternativeName>
</protein>
<dbReference type="EC" id="2.7.7.6" evidence="1"/>
<dbReference type="EMBL" id="AE017262">
    <property type="protein sequence ID" value="AAT05344.1"/>
    <property type="molecule type" value="Genomic_DNA"/>
</dbReference>
<dbReference type="RefSeq" id="WP_003723676.1">
    <property type="nucleotide sequence ID" value="NC_002973.6"/>
</dbReference>
<dbReference type="SMR" id="Q71WH2"/>
<dbReference type="KEGG" id="lmf:LMOf2365_2579"/>
<dbReference type="HOGENOM" id="CLU_053084_0_1_9"/>
<dbReference type="GO" id="GO:0005737">
    <property type="term" value="C:cytoplasm"/>
    <property type="evidence" value="ECO:0007669"/>
    <property type="project" value="UniProtKB-ARBA"/>
</dbReference>
<dbReference type="GO" id="GO:0000428">
    <property type="term" value="C:DNA-directed RNA polymerase complex"/>
    <property type="evidence" value="ECO:0007669"/>
    <property type="project" value="UniProtKB-KW"/>
</dbReference>
<dbReference type="GO" id="GO:0003677">
    <property type="term" value="F:DNA binding"/>
    <property type="evidence" value="ECO:0007669"/>
    <property type="project" value="UniProtKB-UniRule"/>
</dbReference>
<dbReference type="GO" id="GO:0003899">
    <property type="term" value="F:DNA-directed RNA polymerase activity"/>
    <property type="evidence" value="ECO:0007669"/>
    <property type="project" value="UniProtKB-UniRule"/>
</dbReference>
<dbReference type="GO" id="GO:0046983">
    <property type="term" value="F:protein dimerization activity"/>
    <property type="evidence" value="ECO:0007669"/>
    <property type="project" value="InterPro"/>
</dbReference>
<dbReference type="GO" id="GO:0006351">
    <property type="term" value="P:DNA-templated transcription"/>
    <property type="evidence" value="ECO:0007669"/>
    <property type="project" value="UniProtKB-UniRule"/>
</dbReference>
<dbReference type="CDD" id="cd06928">
    <property type="entry name" value="RNAP_alpha_NTD"/>
    <property type="match status" value="1"/>
</dbReference>
<dbReference type="FunFam" id="1.10.150.20:FF:000001">
    <property type="entry name" value="DNA-directed RNA polymerase subunit alpha"/>
    <property type="match status" value="1"/>
</dbReference>
<dbReference type="FunFam" id="2.170.120.12:FF:000001">
    <property type="entry name" value="DNA-directed RNA polymerase subunit alpha"/>
    <property type="match status" value="1"/>
</dbReference>
<dbReference type="Gene3D" id="1.10.150.20">
    <property type="entry name" value="5' to 3' exonuclease, C-terminal subdomain"/>
    <property type="match status" value="1"/>
</dbReference>
<dbReference type="Gene3D" id="2.170.120.12">
    <property type="entry name" value="DNA-directed RNA polymerase, insert domain"/>
    <property type="match status" value="1"/>
</dbReference>
<dbReference type="Gene3D" id="3.30.1360.10">
    <property type="entry name" value="RNA polymerase, RBP11-like subunit"/>
    <property type="match status" value="1"/>
</dbReference>
<dbReference type="HAMAP" id="MF_00059">
    <property type="entry name" value="RNApol_bact_RpoA"/>
    <property type="match status" value="1"/>
</dbReference>
<dbReference type="InterPro" id="IPR011262">
    <property type="entry name" value="DNA-dir_RNA_pol_insert"/>
</dbReference>
<dbReference type="InterPro" id="IPR011263">
    <property type="entry name" value="DNA-dir_RNA_pol_RpoA/D/Rpb3"/>
</dbReference>
<dbReference type="InterPro" id="IPR011773">
    <property type="entry name" value="DNA-dir_RpoA"/>
</dbReference>
<dbReference type="InterPro" id="IPR036603">
    <property type="entry name" value="RBP11-like"/>
</dbReference>
<dbReference type="InterPro" id="IPR011260">
    <property type="entry name" value="RNAP_asu_C"/>
</dbReference>
<dbReference type="InterPro" id="IPR036643">
    <property type="entry name" value="RNApol_insert_sf"/>
</dbReference>
<dbReference type="NCBIfam" id="NF003513">
    <property type="entry name" value="PRK05182.1-2"/>
    <property type="match status" value="1"/>
</dbReference>
<dbReference type="NCBIfam" id="NF003515">
    <property type="entry name" value="PRK05182.2-1"/>
    <property type="match status" value="1"/>
</dbReference>
<dbReference type="NCBIfam" id="NF003519">
    <property type="entry name" value="PRK05182.2-5"/>
    <property type="match status" value="1"/>
</dbReference>
<dbReference type="NCBIfam" id="TIGR02027">
    <property type="entry name" value="rpoA"/>
    <property type="match status" value="1"/>
</dbReference>
<dbReference type="Pfam" id="PF01000">
    <property type="entry name" value="RNA_pol_A_bac"/>
    <property type="match status" value="1"/>
</dbReference>
<dbReference type="Pfam" id="PF03118">
    <property type="entry name" value="RNA_pol_A_CTD"/>
    <property type="match status" value="1"/>
</dbReference>
<dbReference type="Pfam" id="PF01193">
    <property type="entry name" value="RNA_pol_L"/>
    <property type="match status" value="1"/>
</dbReference>
<dbReference type="SMART" id="SM00662">
    <property type="entry name" value="RPOLD"/>
    <property type="match status" value="1"/>
</dbReference>
<dbReference type="SUPFAM" id="SSF47789">
    <property type="entry name" value="C-terminal domain of RNA polymerase alpha subunit"/>
    <property type="match status" value="1"/>
</dbReference>
<dbReference type="SUPFAM" id="SSF56553">
    <property type="entry name" value="Insert subdomain of RNA polymerase alpha subunit"/>
    <property type="match status" value="1"/>
</dbReference>
<dbReference type="SUPFAM" id="SSF55257">
    <property type="entry name" value="RBP11-like subunits of RNA polymerase"/>
    <property type="match status" value="1"/>
</dbReference>
<evidence type="ECO:0000255" key="1">
    <source>
        <dbReference type="HAMAP-Rule" id="MF_00059"/>
    </source>
</evidence>
<gene>
    <name evidence="1" type="primary">rpoA</name>
    <name type="ordered locus">LMOf2365_2579</name>
</gene>